<keyword id="KW-0963">Cytoplasm</keyword>
<keyword id="KW-0489">Methyltransferase</keyword>
<keyword id="KW-1185">Reference proteome</keyword>
<keyword id="KW-0694">RNA-binding</keyword>
<keyword id="KW-0698">rRNA processing</keyword>
<keyword id="KW-0949">S-adenosyl-L-methionine</keyword>
<keyword id="KW-0808">Transferase</keyword>
<dbReference type="EC" id="2.1.1.182" evidence="1"/>
<dbReference type="EMBL" id="CP000462">
    <property type="protein sequence ID" value="ABK36812.1"/>
    <property type="molecule type" value="Genomic_DNA"/>
</dbReference>
<dbReference type="RefSeq" id="YP_855484.1">
    <property type="nucleotide sequence ID" value="NC_008570.1"/>
</dbReference>
<dbReference type="SMR" id="A0KGT8"/>
<dbReference type="STRING" id="380703.AHA_0942"/>
<dbReference type="EnsemblBacteria" id="ABK36812">
    <property type="protein sequence ID" value="ABK36812"/>
    <property type="gene ID" value="AHA_0942"/>
</dbReference>
<dbReference type="KEGG" id="aha:AHA_0942"/>
<dbReference type="PATRIC" id="fig|380703.7.peg.944"/>
<dbReference type="eggNOG" id="COG0030">
    <property type="taxonomic scope" value="Bacteria"/>
</dbReference>
<dbReference type="HOGENOM" id="CLU_041220_0_1_6"/>
<dbReference type="OrthoDB" id="9814755at2"/>
<dbReference type="Proteomes" id="UP000000756">
    <property type="component" value="Chromosome"/>
</dbReference>
<dbReference type="GO" id="GO:0005829">
    <property type="term" value="C:cytosol"/>
    <property type="evidence" value="ECO:0007669"/>
    <property type="project" value="TreeGrafter"/>
</dbReference>
<dbReference type="GO" id="GO:0052908">
    <property type="term" value="F:16S rRNA (adenine(1518)-N(6)/adenine(1519)-N(6))-dimethyltransferase activity"/>
    <property type="evidence" value="ECO:0007669"/>
    <property type="project" value="UniProtKB-EC"/>
</dbReference>
<dbReference type="GO" id="GO:0003723">
    <property type="term" value="F:RNA binding"/>
    <property type="evidence" value="ECO:0007669"/>
    <property type="project" value="UniProtKB-KW"/>
</dbReference>
<dbReference type="FunFam" id="1.10.8.100:FF:000001">
    <property type="entry name" value="Ribosomal RNA small subunit methyltransferase A"/>
    <property type="match status" value="1"/>
</dbReference>
<dbReference type="FunFam" id="3.40.50.150:FF:000006">
    <property type="entry name" value="Ribosomal RNA small subunit methyltransferase A"/>
    <property type="match status" value="1"/>
</dbReference>
<dbReference type="Gene3D" id="1.10.8.100">
    <property type="entry name" value="Ribosomal RNA adenine dimethylase-like, domain 2"/>
    <property type="match status" value="1"/>
</dbReference>
<dbReference type="Gene3D" id="3.40.50.150">
    <property type="entry name" value="Vaccinia Virus protein VP39"/>
    <property type="match status" value="1"/>
</dbReference>
<dbReference type="HAMAP" id="MF_00607">
    <property type="entry name" value="16SrRNA_methyltr_A"/>
    <property type="match status" value="1"/>
</dbReference>
<dbReference type="InterPro" id="IPR001737">
    <property type="entry name" value="KsgA/Erm"/>
</dbReference>
<dbReference type="InterPro" id="IPR023165">
    <property type="entry name" value="rRNA_Ade_diMease-like_C"/>
</dbReference>
<dbReference type="InterPro" id="IPR020596">
    <property type="entry name" value="rRNA_Ade_Mease_Trfase_CS"/>
</dbReference>
<dbReference type="InterPro" id="IPR020598">
    <property type="entry name" value="rRNA_Ade_methylase_Trfase_N"/>
</dbReference>
<dbReference type="InterPro" id="IPR011530">
    <property type="entry name" value="rRNA_adenine_dimethylase"/>
</dbReference>
<dbReference type="InterPro" id="IPR029063">
    <property type="entry name" value="SAM-dependent_MTases_sf"/>
</dbReference>
<dbReference type="NCBIfam" id="TIGR00755">
    <property type="entry name" value="ksgA"/>
    <property type="match status" value="1"/>
</dbReference>
<dbReference type="PANTHER" id="PTHR11727">
    <property type="entry name" value="DIMETHYLADENOSINE TRANSFERASE"/>
    <property type="match status" value="1"/>
</dbReference>
<dbReference type="PANTHER" id="PTHR11727:SF7">
    <property type="entry name" value="DIMETHYLADENOSINE TRANSFERASE-RELATED"/>
    <property type="match status" value="1"/>
</dbReference>
<dbReference type="Pfam" id="PF00398">
    <property type="entry name" value="RrnaAD"/>
    <property type="match status" value="1"/>
</dbReference>
<dbReference type="SMART" id="SM00650">
    <property type="entry name" value="rADc"/>
    <property type="match status" value="1"/>
</dbReference>
<dbReference type="SUPFAM" id="SSF53335">
    <property type="entry name" value="S-adenosyl-L-methionine-dependent methyltransferases"/>
    <property type="match status" value="1"/>
</dbReference>
<dbReference type="PROSITE" id="PS01131">
    <property type="entry name" value="RRNA_A_DIMETH"/>
    <property type="match status" value="1"/>
</dbReference>
<dbReference type="PROSITE" id="PS51689">
    <property type="entry name" value="SAM_RNA_A_N6_MT"/>
    <property type="match status" value="1"/>
</dbReference>
<evidence type="ECO:0000255" key="1">
    <source>
        <dbReference type="HAMAP-Rule" id="MF_00607"/>
    </source>
</evidence>
<proteinExistence type="inferred from homology"/>
<accession>A0KGT8</accession>
<organism>
    <name type="scientific">Aeromonas hydrophila subsp. hydrophila (strain ATCC 7966 / DSM 30187 / BCRC 13018 / CCUG 14551 / JCM 1027 / KCTC 2358 / NCIMB 9240 / NCTC 8049)</name>
    <dbReference type="NCBI Taxonomy" id="380703"/>
    <lineage>
        <taxon>Bacteria</taxon>
        <taxon>Pseudomonadati</taxon>
        <taxon>Pseudomonadota</taxon>
        <taxon>Gammaproteobacteria</taxon>
        <taxon>Aeromonadales</taxon>
        <taxon>Aeromonadaceae</taxon>
        <taxon>Aeromonas</taxon>
    </lineage>
</organism>
<name>RSMA_AERHH</name>
<feature type="chain" id="PRO_1000056592" description="Ribosomal RNA small subunit methyltransferase A">
    <location>
        <begin position="1"/>
        <end position="271"/>
    </location>
</feature>
<feature type="binding site" evidence="1">
    <location>
        <position position="19"/>
    </location>
    <ligand>
        <name>S-adenosyl-L-methionine</name>
        <dbReference type="ChEBI" id="CHEBI:59789"/>
    </ligand>
</feature>
<feature type="binding site" evidence="1">
    <location>
        <position position="21"/>
    </location>
    <ligand>
        <name>S-adenosyl-L-methionine</name>
        <dbReference type="ChEBI" id="CHEBI:59789"/>
    </ligand>
</feature>
<feature type="binding site" evidence="1">
    <location>
        <position position="46"/>
    </location>
    <ligand>
        <name>S-adenosyl-L-methionine</name>
        <dbReference type="ChEBI" id="CHEBI:59789"/>
    </ligand>
</feature>
<feature type="binding site" evidence="1">
    <location>
        <position position="67"/>
    </location>
    <ligand>
        <name>S-adenosyl-L-methionine</name>
        <dbReference type="ChEBI" id="CHEBI:59789"/>
    </ligand>
</feature>
<feature type="binding site" evidence="1">
    <location>
        <position position="92"/>
    </location>
    <ligand>
        <name>S-adenosyl-L-methionine</name>
        <dbReference type="ChEBI" id="CHEBI:59789"/>
    </ligand>
</feature>
<feature type="binding site" evidence="1">
    <location>
        <position position="114"/>
    </location>
    <ligand>
        <name>S-adenosyl-L-methionine</name>
        <dbReference type="ChEBI" id="CHEBI:59789"/>
    </ligand>
</feature>
<reference key="1">
    <citation type="journal article" date="2006" name="J. Bacteriol.">
        <title>Genome sequence of Aeromonas hydrophila ATCC 7966T: jack of all trades.</title>
        <authorList>
            <person name="Seshadri R."/>
            <person name="Joseph S.W."/>
            <person name="Chopra A.K."/>
            <person name="Sha J."/>
            <person name="Shaw J."/>
            <person name="Graf J."/>
            <person name="Haft D.H."/>
            <person name="Wu M."/>
            <person name="Ren Q."/>
            <person name="Rosovitz M.J."/>
            <person name="Madupu R."/>
            <person name="Tallon L."/>
            <person name="Kim M."/>
            <person name="Jin S."/>
            <person name="Vuong H."/>
            <person name="Stine O.C."/>
            <person name="Ali A."/>
            <person name="Horneman A.J."/>
            <person name="Heidelberg J.F."/>
        </authorList>
    </citation>
    <scope>NUCLEOTIDE SEQUENCE [LARGE SCALE GENOMIC DNA]</scope>
    <source>
        <strain>ATCC 7966 / DSM 30187 / BCRC 13018 / CCUG 14551 / JCM 1027 / KCTC 2358 / NCIMB 9240 / NCTC 8049</strain>
    </source>
</reference>
<protein>
    <recommendedName>
        <fullName evidence="1">Ribosomal RNA small subunit methyltransferase A</fullName>
        <ecNumber evidence="1">2.1.1.182</ecNumber>
    </recommendedName>
    <alternativeName>
        <fullName evidence="1">16S rRNA (adenine(1518)-N(6)/adenine(1519)-N(6))-dimethyltransferase</fullName>
    </alternativeName>
    <alternativeName>
        <fullName evidence="1">16S rRNA dimethyladenosine transferase</fullName>
    </alternativeName>
    <alternativeName>
        <fullName evidence="1">16S rRNA dimethylase</fullName>
    </alternativeName>
    <alternativeName>
        <fullName evidence="1">S-adenosylmethionine-6-N', N'-adenosyl(rRNA) dimethyltransferase</fullName>
    </alternativeName>
</protein>
<comment type="function">
    <text evidence="1">Specifically dimethylates two adjacent adenosines (A1518 and A1519) in the loop of a conserved hairpin near the 3'-end of 16S rRNA in the 30S particle. May play a critical role in biogenesis of 30S subunits.</text>
</comment>
<comment type="catalytic activity">
    <reaction evidence="1">
        <text>adenosine(1518)/adenosine(1519) in 16S rRNA + 4 S-adenosyl-L-methionine = N(6)-dimethyladenosine(1518)/N(6)-dimethyladenosine(1519) in 16S rRNA + 4 S-adenosyl-L-homocysteine + 4 H(+)</text>
        <dbReference type="Rhea" id="RHEA:19609"/>
        <dbReference type="Rhea" id="RHEA-COMP:10232"/>
        <dbReference type="Rhea" id="RHEA-COMP:10233"/>
        <dbReference type="ChEBI" id="CHEBI:15378"/>
        <dbReference type="ChEBI" id="CHEBI:57856"/>
        <dbReference type="ChEBI" id="CHEBI:59789"/>
        <dbReference type="ChEBI" id="CHEBI:74411"/>
        <dbReference type="ChEBI" id="CHEBI:74493"/>
        <dbReference type="EC" id="2.1.1.182"/>
    </reaction>
</comment>
<comment type="subcellular location">
    <subcellularLocation>
        <location evidence="1">Cytoplasm</location>
    </subcellularLocation>
</comment>
<comment type="similarity">
    <text evidence="1">Belongs to the class I-like SAM-binding methyltransferase superfamily. rRNA adenine N(6)-methyltransferase family. RsmA subfamily.</text>
</comment>
<gene>
    <name evidence="1" type="primary">rsmA</name>
    <name evidence="1" type="synonym">ksgA</name>
    <name type="ordered locus">AHA_0942</name>
</gene>
<sequence length="271" mass="30282">MQSNKVHMGHTARKRFGQNFLHDRYVIDQIVAAINPQPGQNLVEIGPGLAALTEPVASQMDKMTVVELDRDLAARLREHPTLKEKLTVIEADAMRFDFGTLMGEGKGPLRIFGNLPYNISTPLIFHLCEFADRVEDMHFMLQKEVVLRLAAGPGSKAYGRLSVMTQYYCQVVPVLEVGPGAFKPAPKVDSAVVRLIPHKNPTIVAKDIRCLNRVCTEGFGQRRKTIRNSFSNFITDAQLTELGIDGNLRPENLSLEQFVMIANWLADQQQA</sequence>